<proteinExistence type="evidence at protein level"/>
<evidence type="ECO:0000250" key="1"/>
<evidence type="ECO:0000250" key="2">
    <source>
        <dbReference type="UniProtKB" id="Q15678"/>
    </source>
</evidence>
<evidence type="ECO:0000255" key="3">
    <source>
        <dbReference type="PROSITE-ProRule" id="PRU00084"/>
    </source>
</evidence>
<evidence type="ECO:0000255" key="4">
    <source>
        <dbReference type="PROSITE-ProRule" id="PRU00160"/>
    </source>
</evidence>
<evidence type="ECO:0000255" key="5">
    <source>
        <dbReference type="PROSITE-ProRule" id="PRU10044"/>
    </source>
</evidence>
<evidence type="ECO:0000256" key="6">
    <source>
        <dbReference type="SAM" id="MobiDB-lite"/>
    </source>
</evidence>
<evidence type="ECO:0000269" key="7">
    <source>
    </source>
</evidence>
<evidence type="ECO:0000305" key="8"/>
<evidence type="ECO:0007744" key="9">
    <source>
    </source>
</evidence>
<keyword id="KW-0963">Cytoplasm</keyword>
<keyword id="KW-0206">Cytoskeleton</keyword>
<keyword id="KW-0378">Hydrolase</keyword>
<keyword id="KW-0539">Nucleus</keyword>
<keyword id="KW-0597">Phosphoprotein</keyword>
<keyword id="KW-0904">Protein phosphatase</keyword>
<keyword id="KW-1185">Reference proteome</keyword>
<keyword id="KW-0804">Transcription</keyword>
<keyword id="KW-0805">Transcription regulation</keyword>
<keyword id="KW-0832">Ubl conjugation</keyword>
<sequence length="1189" mass="135042">MPFGLKLRRTRRYNVLSKNCFVTRIRLLDSNVIECTLSVESTGQECLEAVAQRLELRETHYFGLWFLSKSQQARWVELEKPLKKHLDKFANEPLLFFGVMFYVPNVSRLQQEATRYQYYLQVKKDVLEGRLRCSLEQVIRLAGLAVQADFGDYNQFDSQEFLREYVLFPMDLAMEEAALEELTQKVAQEHKAHSGILPAEAELMYINEVERLDGFGQEIFPVKDSHGNSVHLGIFFMGIFVRNRVGRQAVIYRWNDIGSVTHSKAAILLELIDKEETALFHTDDIENAKYISRLFTTRHKFYKQNKICTEQSNSPPPIRRQPTWSRSSLPRQQPYILPPMHVQCSEHYSETHTSQDSIFPGNEEALYCRSHNSLDLNYLNGTVTNGSVCSVHSVNSLSCSQSFIQASPVSSNLSIPGSDIMRADYIPSHRHSTIIVPSYRPTPDYETVMRQMKRGLMHADSQSRSLRNLNIINTHAYNQPEELVYSQPEMRERHPYTVPYAHQGCYGHKLVSPSDQMNPQNCAMPIKPGASSISHTVSTPELANMQLQGAQHYSTAHMLKNYLFRPPPPYPRPRPATSTPDLASHRHKYVSGSSPDLVTRKVQLSVKTFQEDSSPVVHQSLQEVSEPLTATKHHGGGGGTVNKRHSLEVMNSMVRGMEAMTLKSLNIPMARRNTLREQGPSEETGGHEVHGLPQYHHKKTFSDATMLIHSSESEEEEETLEAAPQVPVLREKVEYSAQLQAALARIPNRPPPEYPGPRKSVSNGALRQDQGTPLPAMARCRVLRHGPSKALSVSRAEQLAVNGASLGPSISEPDLTSVKERVKKEPVKERPVSEMFSLEDSIIEREMMIRNLEKQKMTGPQAQKRPLMLAALNGLSVARVSGREDGHHDATRVPIDERLRALKKKLEDGMVFTEYEQIPNKKANGVFSTATLPENAERSRIREVVPYEENRVELIPTKENNTGYINASHIKVVVGGSEWHYIATQGPLPHTCHDFWQMVWEQGVNVIAMVTAEEEGGRTKSHRYWPKLGSKHSSATYGKFKVTTKFRTDSGCYATTGLKVKHLLSGQERTVWHLQYTDWPHHGCPEDVQGFLSYLEEIQSVRRHTNSVLEGIRTRHPPIVVHCSAGVGRTGVVILSELMIYCLEHNEKVEVPTMLRFLREQRMFMIQTIAQYKFVYQVLVQFLQNSRLI</sequence>
<organism>
    <name type="scientific">Mus musculus</name>
    <name type="common">Mouse</name>
    <dbReference type="NCBI Taxonomy" id="10090"/>
    <lineage>
        <taxon>Eukaryota</taxon>
        <taxon>Metazoa</taxon>
        <taxon>Chordata</taxon>
        <taxon>Craniata</taxon>
        <taxon>Vertebrata</taxon>
        <taxon>Euteleostomi</taxon>
        <taxon>Mammalia</taxon>
        <taxon>Eutheria</taxon>
        <taxon>Euarchontoglires</taxon>
        <taxon>Glires</taxon>
        <taxon>Rodentia</taxon>
        <taxon>Myomorpha</taxon>
        <taxon>Muroidea</taxon>
        <taxon>Muridae</taxon>
        <taxon>Murinae</taxon>
        <taxon>Mus</taxon>
        <taxon>Mus</taxon>
    </lineage>
</organism>
<protein>
    <recommendedName>
        <fullName>Tyrosine-protein phosphatase non-receptor type 14</fullName>
        <ecNumber>3.1.3.48</ecNumber>
    </recommendedName>
    <alternativeName>
        <fullName>Protein-tyrosine phosphatase PTP36</fullName>
    </alternativeName>
</protein>
<dbReference type="EC" id="3.1.3.48"/>
<dbReference type="EMBL" id="D31842">
    <property type="protein sequence ID" value="BAA06628.1"/>
    <property type="molecule type" value="mRNA"/>
</dbReference>
<dbReference type="EMBL" id="AC140250">
    <property type="status" value="NOT_ANNOTATED_CDS"/>
    <property type="molecule type" value="Genomic_DNA"/>
</dbReference>
<dbReference type="EMBL" id="AC140461">
    <property type="status" value="NOT_ANNOTATED_CDS"/>
    <property type="molecule type" value="Genomic_DNA"/>
</dbReference>
<dbReference type="EMBL" id="CH466555">
    <property type="protein sequence ID" value="EDL13025.1"/>
    <property type="molecule type" value="Genomic_DNA"/>
</dbReference>
<dbReference type="EMBL" id="CH466555">
    <property type="protein sequence ID" value="EDL13028.1"/>
    <property type="molecule type" value="Genomic_DNA"/>
</dbReference>
<dbReference type="CCDS" id="CCDS15609.1"/>
<dbReference type="PIR" id="JC2366">
    <property type="entry name" value="JC2366"/>
</dbReference>
<dbReference type="RefSeq" id="NP_033002.2">
    <property type="nucleotide sequence ID" value="NM_008976.2"/>
</dbReference>
<dbReference type="RefSeq" id="XP_006497192.1">
    <property type="nucleotide sequence ID" value="XM_006497129.5"/>
</dbReference>
<dbReference type="RefSeq" id="XP_006497193.1">
    <property type="nucleotide sequence ID" value="XM_006497130.3"/>
</dbReference>
<dbReference type="RefSeq" id="XP_006497194.1">
    <property type="nucleotide sequence ID" value="XM_006497131.5"/>
</dbReference>
<dbReference type="RefSeq" id="XP_006497196.1">
    <property type="nucleotide sequence ID" value="XM_006497133.5"/>
</dbReference>
<dbReference type="RefSeq" id="XP_030108157.1">
    <property type="nucleotide sequence ID" value="XM_030252297.2"/>
</dbReference>
<dbReference type="RefSeq" id="XP_036018685.1">
    <property type="nucleotide sequence ID" value="XM_036162792.1"/>
</dbReference>
<dbReference type="SMR" id="Q62130"/>
<dbReference type="BioGRID" id="202480">
    <property type="interactions" value="13"/>
</dbReference>
<dbReference type="FunCoup" id="Q62130">
    <property type="interactions" value="2851"/>
</dbReference>
<dbReference type="IntAct" id="Q62130">
    <property type="interactions" value="1"/>
</dbReference>
<dbReference type="STRING" id="10090.ENSMUSP00000095051"/>
<dbReference type="iPTMnet" id="Q62130"/>
<dbReference type="PhosphoSitePlus" id="Q62130"/>
<dbReference type="jPOST" id="Q62130"/>
<dbReference type="PaxDb" id="10090-ENSMUSP00000095051"/>
<dbReference type="PeptideAtlas" id="Q62130"/>
<dbReference type="ProteomicsDB" id="291628"/>
<dbReference type="Pumba" id="Q62130"/>
<dbReference type="Antibodypedia" id="34618">
    <property type="antibodies" value="160 antibodies from 27 providers"/>
</dbReference>
<dbReference type="DNASU" id="19250"/>
<dbReference type="Ensembl" id="ENSMUST00000097442.9">
    <property type="protein sequence ID" value="ENSMUSP00000095051.3"/>
    <property type="gene ID" value="ENSMUSG00000026604.18"/>
</dbReference>
<dbReference type="GeneID" id="19250"/>
<dbReference type="KEGG" id="mmu:19250"/>
<dbReference type="UCSC" id="uc007eau.1">
    <property type="organism name" value="mouse"/>
</dbReference>
<dbReference type="AGR" id="MGI:102467"/>
<dbReference type="CTD" id="5784"/>
<dbReference type="MGI" id="MGI:102467">
    <property type="gene designation" value="Ptpn14"/>
</dbReference>
<dbReference type="VEuPathDB" id="HostDB:ENSMUSG00000026604"/>
<dbReference type="eggNOG" id="KOG0792">
    <property type="taxonomic scope" value="Eukaryota"/>
</dbReference>
<dbReference type="GeneTree" id="ENSGT00940000156874"/>
<dbReference type="InParanoid" id="Q62130"/>
<dbReference type="OMA" id="FKKCRQY"/>
<dbReference type="OrthoDB" id="10012364at2759"/>
<dbReference type="PhylomeDB" id="Q62130"/>
<dbReference type="TreeFam" id="TF315900"/>
<dbReference type="BRENDA" id="3.1.3.48">
    <property type="organism ID" value="3474"/>
</dbReference>
<dbReference type="BioGRID-ORCS" id="19250">
    <property type="hits" value="0 hits in 82 CRISPR screens"/>
</dbReference>
<dbReference type="ChiTaRS" id="Ptpn14">
    <property type="organism name" value="mouse"/>
</dbReference>
<dbReference type="PRO" id="PR:Q62130"/>
<dbReference type="Proteomes" id="UP000000589">
    <property type="component" value="Chromosome 1"/>
</dbReference>
<dbReference type="RNAct" id="Q62130">
    <property type="molecule type" value="protein"/>
</dbReference>
<dbReference type="Bgee" id="ENSMUSG00000026604">
    <property type="expression patterns" value="Expressed in endothelial cell of lymphatic vessel and 187 other cell types or tissues"/>
</dbReference>
<dbReference type="ExpressionAtlas" id="Q62130">
    <property type="expression patterns" value="baseline and differential"/>
</dbReference>
<dbReference type="GO" id="GO:0005737">
    <property type="term" value="C:cytoplasm"/>
    <property type="evidence" value="ECO:0000250"/>
    <property type="project" value="UniProtKB"/>
</dbReference>
<dbReference type="GO" id="GO:0005856">
    <property type="term" value="C:cytoskeleton"/>
    <property type="evidence" value="ECO:0007669"/>
    <property type="project" value="UniProtKB-SubCell"/>
</dbReference>
<dbReference type="GO" id="GO:0005654">
    <property type="term" value="C:nucleoplasm"/>
    <property type="evidence" value="ECO:0007669"/>
    <property type="project" value="Ensembl"/>
</dbReference>
<dbReference type="GO" id="GO:0005634">
    <property type="term" value="C:nucleus"/>
    <property type="evidence" value="ECO:0000250"/>
    <property type="project" value="UniProtKB"/>
</dbReference>
<dbReference type="GO" id="GO:0004725">
    <property type="term" value="F:protein tyrosine phosphatase activity"/>
    <property type="evidence" value="ECO:0000250"/>
    <property type="project" value="UniProtKB"/>
</dbReference>
<dbReference type="GO" id="GO:0030971">
    <property type="term" value="F:receptor tyrosine kinase binding"/>
    <property type="evidence" value="ECO:0007669"/>
    <property type="project" value="Ensembl"/>
</dbReference>
<dbReference type="GO" id="GO:0003712">
    <property type="term" value="F:transcription coregulator activity"/>
    <property type="evidence" value="ECO:0000250"/>
    <property type="project" value="UniProtKB"/>
</dbReference>
<dbReference type="GO" id="GO:0001946">
    <property type="term" value="P:lymphangiogenesis"/>
    <property type="evidence" value="ECO:0000315"/>
    <property type="project" value="UniProtKB"/>
</dbReference>
<dbReference type="GO" id="GO:0008285">
    <property type="term" value="P:negative regulation of cell population proliferation"/>
    <property type="evidence" value="ECO:0007669"/>
    <property type="project" value="Ensembl"/>
</dbReference>
<dbReference type="GO" id="GO:0046825">
    <property type="term" value="P:regulation of protein export from nucleus"/>
    <property type="evidence" value="ECO:0000250"/>
    <property type="project" value="UniProtKB"/>
</dbReference>
<dbReference type="CDD" id="cd14473">
    <property type="entry name" value="FERM_B-lobe"/>
    <property type="match status" value="1"/>
</dbReference>
<dbReference type="CDD" id="cd13188">
    <property type="entry name" value="FERM_C_PTPN14_PTPN21"/>
    <property type="match status" value="1"/>
</dbReference>
<dbReference type="CDD" id="cd17191">
    <property type="entry name" value="FERM_F1_PTPN14"/>
    <property type="match status" value="1"/>
</dbReference>
<dbReference type="CDD" id="cd14599">
    <property type="entry name" value="PTPc-N14"/>
    <property type="match status" value="1"/>
</dbReference>
<dbReference type="FunFam" id="1.20.80.10:FF:000014">
    <property type="entry name" value="Tyrosine-protein phosphatase non-receptor type"/>
    <property type="match status" value="1"/>
</dbReference>
<dbReference type="FunFam" id="2.30.29.30:FF:000149">
    <property type="entry name" value="Tyrosine-protein phosphatase non-receptor type"/>
    <property type="match status" value="1"/>
</dbReference>
<dbReference type="FunFam" id="3.10.20.90:FF:000039">
    <property type="entry name" value="Tyrosine-protein phosphatase non-receptor type"/>
    <property type="match status" value="1"/>
</dbReference>
<dbReference type="FunFam" id="3.90.190.10:FF:000030">
    <property type="entry name" value="Tyrosine-protein phosphatase non-receptor type"/>
    <property type="match status" value="1"/>
</dbReference>
<dbReference type="Gene3D" id="1.20.80.10">
    <property type="match status" value="1"/>
</dbReference>
<dbReference type="Gene3D" id="3.10.20.90">
    <property type="entry name" value="Phosphatidylinositol 3-kinase Catalytic Subunit, Chain A, domain 1"/>
    <property type="match status" value="1"/>
</dbReference>
<dbReference type="Gene3D" id="2.30.29.30">
    <property type="entry name" value="Pleckstrin-homology domain (PH domain)/Phosphotyrosine-binding domain (PTB)"/>
    <property type="match status" value="1"/>
</dbReference>
<dbReference type="Gene3D" id="3.90.190.10">
    <property type="entry name" value="Protein tyrosine phosphatase superfamily"/>
    <property type="match status" value="1"/>
</dbReference>
<dbReference type="InterPro" id="IPR019749">
    <property type="entry name" value="Band_41_domain"/>
</dbReference>
<dbReference type="InterPro" id="IPR014352">
    <property type="entry name" value="FERM/acyl-CoA-bd_prot_sf"/>
</dbReference>
<dbReference type="InterPro" id="IPR035963">
    <property type="entry name" value="FERM_2"/>
</dbReference>
<dbReference type="InterPro" id="IPR019748">
    <property type="entry name" value="FERM_central"/>
</dbReference>
<dbReference type="InterPro" id="IPR019747">
    <property type="entry name" value="FERM_CS"/>
</dbReference>
<dbReference type="InterPro" id="IPR000299">
    <property type="entry name" value="FERM_domain"/>
</dbReference>
<dbReference type="InterPro" id="IPR018979">
    <property type="entry name" value="FERM_N"/>
</dbReference>
<dbReference type="InterPro" id="IPR018980">
    <property type="entry name" value="FERM_PH-like_C"/>
</dbReference>
<dbReference type="InterPro" id="IPR011993">
    <property type="entry name" value="PH-like_dom_sf"/>
</dbReference>
<dbReference type="InterPro" id="IPR029021">
    <property type="entry name" value="Prot-tyrosine_phosphatase-like"/>
</dbReference>
<dbReference type="InterPro" id="IPR000242">
    <property type="entry name" value="PTP_cat"/>
</dbReference>
<dbReference type="InterPro" id="IPR014392">
    <property type="entry name" value="PTP_non-rcpt_14/21"/>
</dbReference>
<dbReference type="InterPro" id="IPR041782">
    <property type="entry name" value="PTPN14/21_FERM_C"/>
</dbReference>
<dbReference type="InterPro" id="IPR016130">
    <property type="entry name" value="Tyr_Pase_AS"/>
</dbReference>
<dbReference type="InterPro" id="IPR003595">
    <property type="entry name" value="Tyr_Pase_cat"/>
</dbReference>
<dbReference type="InterPro" id="IPR000387">
    <property type="entry name" value="Tyr_Pase_dom"/>
</dbReference>
<dbReference type="InterPro" id="IPR029071">
    <property type="entry name" value="Ubiquitin-like_domsf"/>
</dbReference>
<dbReference type="PANTHER" id="PTHR45706">
    <property type="entry name" value="TYROSINE-PROTEIN PHOSPHATASE"/>
    <property type="match status" value="1"/>
</dbReference>
<dbReference type="PANTHER" id="PTHR45706:SF6">
    <property type="entry name" value="TYROSINE-PROTEIN PHOSPHATASE NON-RECEPTOR TYPE 14"/>
    <property type="match status" value="1"/>
</dbReference>
<dbReference type="Pfam" id="PF09380">
    <property type="entry name" value="FERM_C"/>
    <property type="match status" value="1"/>
</dbReference>
<dbReference type="Pfam" id="PF00373">
    <property type="entry name" value="FERM_M"/>
    <property type="match status" value="1"/>
</dbReference>
<dbReference type="Pfam" id="PF09379">
    <property type="entry name" value="FERM_N"/>
    <property type="match status" value="1"/>
</dbReference>
<dbReference type="Pfam" id="PF00102">
    <property type="entry name" value="Y_phosphatase"/>
    <property type="match status" value="1"/>
</dbReference>
<dbReference type="PIRSF" id="PIRSF000934">
    <property type="entry name" value="Tyr-Ptase_nr14"/>
    <property type="match status" value="1"/>
</dbReference>
<dbReference type="PRINTS" id="PR00935">
    <property type="entry name" value="BAND41"/>
</dbReference>
<dbReference type="PRINTS" id="PR00700">
    <property type="entry name" value="PRTYPHPHTASE"/>
</dbReference>
<dbReference type="SMART" id="SM00295">
    <property type="entry name" value="B41"/>
    <property type="match status" value="1"/>
</dbReference>
<dbReference type="SMART" id="SM01196">
    <property type="entry name" value="FERM_C"/>
    <property type="match status" value="1"/>
</dbReference>
<dbReference type="SMART" id="SM00194">
    <property type="entry name" value="PTPc"/>
    <property type="match status" value="1"/>
</dbReference>
<dbReference type="SMART" id="SM00404">
    <property type="entry name" value="PTPc_motif"/>
    <property type="match status" value="1"/>
</dbReference>
<dbReference type="SUPFAM" id="SSF52799">
    <property type="entry name" value="(Phosphotyrosine protein) phosphatases II"/>
    <property type="match status" value="1"/>
</dbReference>
<dbReference type="SUPFAM" id="SSF50729">
    <property type="entry name" value="PH domain-like"/>
    <property type="match status" value="1"/>
</dbReference>
<dbReference type="SUPFAM" id="SSF47031">
    <property type="entry name" value="Second domain of FERM"/>
    <property type="match status" value="1"/>
</dbReference>
<dbReference type="SUPFAM" id="SSF54236">
    <property type="entry name" value="Ubiquitin-like"/>
    <property type="match status" value="1"/>
</dbReference>
<dbReference type="PROSITE" id="PS00660">
    <property type="entry name" value="FERM_1"/>
    <property type="match status" value="1"/>
</dbReference>
<dbReference type="PROSITE" id="PS00661">
    <property type="entry name" value="FERM_2"/>
    <property type="match status" value="1"/>
</dbReference>
<dbReference type="PROSITE" id="PS50057">
    <property type="entry name" value="FERM_3"/>
    <property type="match status" value="1"/>
</dbReference>
<dbReference type="PROSITE" id="PS00383">
    <property type="entry name" value="TYR_PHOSPHATASE_1"/>
    <property type="match status" value="1"/>
</dbReference>
<dbReference type="PROSITE" id="PS50056">
    <property type="entry name" value="TYR_PHOSPHATASE_2"/>
    <property type="match status" value="1"/>
</dbReference>
<dbReference type="PROSITE" id="PS50055">
    <property type="entry name" value="TYR_PHOSPHATASE_PTP"/>
    <property type="match status" value="1"/>
</dbReference>
<comment type="function">
    <text evidence="7">Protein tyrosine phosphatase which may play a role in the regulation of lymphangiogenesis, cell-cell adhesion, cell-matrix adhesion, cell migration, cell growth and also regulates TGF-beta gene expression, thereby modulating epithelial-mesenchymal transition. Mediates beta-catenin dephosphorylation at adhesion junctions. Acts as a negative regulator of the oncogenic property of YAP, a downstream target of the hippo pathway, in a cell density-dependent manner. May function as a tumor suppressor.</text>
</comment>
<comment type="catalytic activity">
    <reaction evidence="5">
        <text>O-phospho-L-tyrosyl-[protein] + H2O = L-tyrosyl-[protein] + phosphate</text>
        <dbReference type="Rhea" id="RHEA:10684"/>
        <dbReference type="Rhea" id="RHEA-COMP:10136"/>
        <dbReference type="Rhea" id="RHEA-COMP:20101"/>
        <dbReference type="ChEBI" id="CHEBI:15377"/>
        <dbReference type="ChEBI" id="CHEBI:43474"/>
        <dbReference type="ChEBI" id="CHEBI:46858"/>
        <dbReference type="ChEBI" id="CHEBI:61978"/>
        <dbReference type="EC" id="3.1.3.48"/>
    </reaction>
</comment>
<comment type="subunit">
    <text evidence="1">Interacts with FLT4; the interaction is enhanced by stimulation with VEGFC. Interacts (via PPxY motifs) with YAP1 (via WW domains); this interaction leads to the cytoplasmic sequestration of YAP1 and inhibits its transcriptional coactivator activity.</text>
</comment>
<comment type="subcellular location">
    <subcellularLocation>
        <location evidence="1">Cytoplasm</location>
    </subcellularLocation>
    <subcellularLocation>
        <location evidence="1">Cytoplasm</location>
        <location evidence="1">Cytoskeleton</location>
    </subcellularLocation>
    <subcellularLocation>
        <location evidence="1">Nucleus</location>
    </subcellularLocation>
    <text evidence="1">Translocation into the nucleus is associated with induction of cell proliferation. Partially colocalized with actin filaments at the plasma membrane.</text>
</comment>
<comment type="tissue specificity">
    <text>Thymus; in cells of both hematopoietic and non-hematopoietic origins.</text>
</comment>
<comment type="PTM">
    <text evidence="1">Ubiquitinated by the ECS (Elongin BC-CUL2/5-SOCS-box protein)/LRR1 E3 ligase complex and subsequently targeted to proteasomal degradation.</text>
</comment>
<comment type="disruption phenotype">
    <text evidence="7">PTPN14 deficient mice have swelling of the limbs or periorbital edema. These mice also show hyperplasia of lymphatic capillaries of the ears. There is no evidence of choanal atresia or any overtly dysmorphic features.</text>
</comment>
<comment type="similarity">
    <text evidence="8">Belongs to the protein-tyrosine phosphatase family. Non-receptor class subfamily.</text>
</comment>
<accession>Q62130</accession>
<accession>G5E8M1</accession>
<gene>
    <name type="primary">Ptpn14</name>
</gene>
<name>PTN14_MOUSE</name>
<reference key="1">
    <citation type="journal article" date="1994" name="Biochem. Biophys. Res. Commun.">
        <title>cDNA cloning of a novel protein tyrosine phosphatase with homology to cytoskeletal protein 4.1 and its expression in T-lineage cells.</title>
        <authorList>
            <person name="Sawada M."/>
            <person name="Ogata M."/>
            <person name="Fujino Y."/>
            <person name="Hamaoka T."/>
        </authorList>
    </citation>
    <scope>NUCLEOTIDE SEQUENCE [MRNA]</scope>
    <source>
        <strain>CB-17/SCID</strain>
        <tissue>Thymus</tissue>
    </source>
</reference>
<reference key="2">
    <citation type="journal article" date="2009" name="PLoS Biol.">
        <title>Lineage-specific biology revealed by a finished genome assembly of the mouse.</title>
        <authorList>
            <person name="Church D.M."/>
            <person name="Goodstadt L."/>
            <person name="Hillier L.W."/>
            <person name="Zody M.C."/>
            <person name="Goldstein S."/>
            <person name="She X."/>
            <person name="Bult C.J."/>
            <person name="Agarwala R."/>
            <person name="Cherry J.L."/>
            <person name="DiCuccio M."/>
            <person name="Hlavina W."/>
            <person name="Kapustin Y."/>
            <person name="Meric P."/>
            <person name="Maglott D."/>
            <person name="Birtle Z."/>
            <person name="Marques A.C."/>
            <person name="Graves T."/>
            <person name="Zhou S."/>
            <person name="Teague B."/>
            <person name="Potamousis K."/>
            <person name="Churas C."/>
            <person name="Place M."/>
            <person name="Herschleb J."/>
            <person name="Runnheim R."/>
            <person name="Forrest D."/>
            <person name="Amos-Landgraf J."/>
            <person name="Schwartz D.C."/>
            <person name="Cheng Z."/>
            <person name="Lindblad-Toh K."/>
            <person name="Eichler E.E."/>
            <person name="Ponting C.P."/>
        </authorList>
    </citation>
    <scope>NUCLEOTIDE SEQUENCE [LARGE SCALE GENOMIC DNA]</scope>
    <source>
        <strain>C57BL/6J</strain>
    </source>
</reference>
<reference key="3">
    <citation type="submission" date="2005-09" db="EMBL/GenBank/DDBJ databases">
        <authorList>
            <person name="Mural R.J."/>
            <person name="Adams M.D."/>
            <person name="Myers E.W."/>
            <person name="Smith H.O."/>
            <person name="Venter J.C."/>
        </authorList>
    </citation>
    <scope>NUCLEOTIDE SEQUENCE [LARGE SCALE GENOMIC DNA]</scope>
</reference>
<reference key="4">
    <citation type="journal article" date="2010" name="Am. J. Hum. Genet.">
        <title>Protein tyrosine phosphatase PTPN14 is a regulator of lymphatic function and choanal development in humans.</title>
        <authorList>
            <person name="Au A.C."/>
            <person name="Hernandez P.A."/>
            <person name="Lieber E."/>
            <person name="Nadroo A.M."/>
            <person name="Shen Y.M."/>
            <person name="Kelley K.A."/>
            <person name="Gelb B.D."/>
            <person name="Diaz G.A."/>
        </authorList>
    </citation>
    <scope>FUNCTION</scope>
    <scope>DISRUPTION PHENOTYPE</scope>
</reference>
<reference key="5">
    <citation type="journal article" date="2010" name="Cell">
        <title>A tissue-specific atlas of mouse protein phosphorylation and expression.</title>
        <authorList>
            <person name="Huttlin E.L."/>
            <person name="Jedrychowski M.P."/>
            <person name="Elias J.E."/>
            <person name="Goswami T."/>
            <person name="Rad R."/>
            <person name="Beausoleil S.A."/>
            <person name="Villen J."/>
            <person name="Haas W."/>
            <person name="Sowa M.E."/>
            <person name="Gygi S.P."/>
        </authorList>
    </citation>
    <scope>PHOSPHORYLATION [LARGE SCALE ANALYSIS] AT SER-314; SER-461; SER-486; SER-593; SER-594 AND SER-833</scope>
    <scope>IDENTIFICATION BY MASS SPECTROMETRY [LARGE SCALE ANALYSIS]</scope>
    <source>
        <tissue>Brown adipose tissue</tissue>
        <tissue>Heart</tissue>
        <tissue>Kidney</tissue>
        <tissue>Lung</tissue>
        <tissue>Pancreas</tissue>
        <tissue>Spleen</tissue>
    </source>
</reference>
<feature type="chain" id="PRO_0000219438" description="Tyrosine-protein phosphatase non-receptor type 14">
    <location>
        <begin position="1"/>
        <end position="1189"/>
    </location>
</feature>
<feature type="domain" description="FERM" evidence="3">
    <location>
        <begin position="21"/>
        <end position="306"/>
    </location>
</feature>
<feature type="domain" description="Tyrosine-protein phosphatase" evidence="4">
    <location>
        <begin position="911"/>
        <end position="1182"/>
    </location>
</feature>
<feature type="region of interest" description="Disordered" evidence="6">
    <location>
        <begin position="744"/>
        <end position="775"/>
    </location>
</feature>
<feature type="compositionally biased region" description="Polar residues" evidence="6">
    <location>
        <begin position="760"/>
        <end position="771"/>
    </location>
</feature>
<feature type="active site" description="Phosphocysteine intermediate" evidence="4 5">
    <location>
        <position position="1123"/>
    </location>
</feature>
<feature type="binding site" evidence="1">
    <location>
        <begin position="1123"/>
        <end position="1129"/>
    </location>
    <ligand>
        <name>substrate</name>
    </ligand>
</feature>
<feature type="binding site" evidence="1">
    <location>
        <position position="1167"/>
    </location>
    <ligand>
        <name>substrate</name>
    </ligand>
</feature>
<feature type="modified residue" description="Phosphoserine" evidence="9">
    <location>
        <position position="314"/>
    </location>
</feature>
<feature type="modified residue" description="Phosphoserine" evidence="9">
    <location>
        <position position="461"/>
    </location>
</feature>
<feature type="modified residue" description="Phosphoserine" evidence="9">
    <location>
        <position position="486"/>
    </location>
</feature>
<feature type="modified residue" description="Phosphoserine" evidence="2">
    <location>
        <position position="591"/>
    </location>
</feature>
<feature type="modified residue" description="Phosphoserine" evidence="9">
    <location>
        <position position="593"/>
    </location>
</feature>
<feature type="modified residue" description="Phosphoserine" evidence="9">
    <location>
        <position position="594"/>
    </location>
</feature>
<feature type="modified residue" description="Phosphoserine" evidence="2">
    <location>
        <position position="646"/>
    </location>
</feature>
<feature type="modified residue" description="Phosphoserine" evidence="9">
    <location>
        <position position="833"/>
    </location>
</feature>
<feature type="sequence conflict" description="In Ref. 1; BAA06628." evidence="8" ref="1">
    <original>T</original>
    <variation>A</variation>
    <location>
        <position position="23"/>
    </location>
</feature>
<feature type="sequence conflict" description="In Ref. 1; BAA06628." evidence="8" ref="1">
    <original>H</original>
    <variation>R</variation>
    <location>
        <position position="887"/>
    </location>
</feature>